<gene>
    <name evidence="1" type="primary">gpmI2</name>
    <name type="ordered locus">Mbar_A2222</name>
</gene>
<reference key="1">
    <citation type="journal article" date="2006" name="J. Bacteriol.">
        <title>The Methanosarcina barkeri genome: comparative analysis with Methanosarcina acetivorans and Methanosarcina mazei reveals extensive rearrangement within methanosarcinal genomes.</title>
        <authorList>
            <person name="Maeder D.L."/>
            <person name="Anderson I."/>
            <person name="Brettin T.S."/>
            <person name="Bruce D.C."/>
            <person name="Gilna P."/>
            <person name="Han C.S."/>
            <person name="Lapidus A."/>
            <person name="Metcalf W.W."/>
            <person name="Saunders E."/>
            <person name="Tapia R."/>
            <person name="Sowers K.R."/>
        </authorList>
    </citation>
    <scope>NUCLEOTIDE SEQUENCE [LARGE SCALE GENOMIC DNA]</scope>
    <source>
        <strain>Fusaro / DSM 804</strain>
    </source>
</reference>
<comment type="function">
    <text evidence="1">Catalyzes the interconversion of 2-phosphoglycerate and 3-phosphoglycerate.</text>
</comment>
<comment type="catalytic activity">
    <reaction evidence="1">
        <text>(2R)-2-phosphoglycerate = (2R)-3-phosphoglycerate</text>
        <dbReference type="Rhea" id="RHEA:15901"/>
        <dbReference type="ChEBI" id="CHEBI:58272"/>
        <dbReference type="ChEBI" id="CHEBI:58289"/>
        <dbReference type="EC" id="5.4.2.12"/>
    </reaction>
</comment>
<comment type="cofactor">
    <cofactor evidence="1">
        <name>Mn(2+)</name>
        <dbReference type="ChEBI" id="CHEBI:29035"/>
    </cofactor>
    <text evidence="1">Binds 2 manganese ions per subunit.</text>
</comment>
<comment type="pathway">
    <text evidence="1">Carbohydrate degradation; glycolysis; pyruvate from D-glyceraldehyde 3-phosphate: step 3/5.</text>
</comment>
<comment type="similarity">
    <text evidence="1">Belongs to the BPG-independent phosphoglycerate mutase family.</text>
</comment>
<dbReference type="EC" id="5.4.2.12" evidence="1"/>
<dbReference type="EMBL" id="CP000099">
    <property type="protein sequence ID" value="AAZ71148.1"/>
    <property type="molecule type" value="Genomic_DNA"/>
</dbReference>
<dbReference type="SMR" id="Q46AE4"/>
<dbReference type="STRING" id="269797.Mbar_A2222"/>
<dbReference type="PaxDb" id="269797-Mbar_A2222"/>
<dbReference type="KEGG" id="mba:Mbar_A2222"/>
<dbReference type="eggNOG" id="arCOG03068">
    <property type="taxonomic scope" value="Archaea"/>
</dbReference>
<dbReference type="HOGENOM" id="CLU_026099_2_0_2"/>
<dbReference type="OrthoDB" id="146005at2157"/>
<dbReference type="UniPathway" id="UPA00109">
    <property type="reaction ID" value="UER00186"/>
</dbReference>
<dbReference type="GO" id="GO:0005737">
    <property type="term" value="C:cytoplasm"/>
    <property type="evidence" value="ECO:0007669"/>
    <property type="project" value="InterPro"/>
</dbReference>
<dbReference type="GO" id="GO:0030145">
    <property type="term" value="F:manganese ion binding"/>
    <property type="evidence" value="ECO:0007669"/>
    <property type="project" value="UniProtKB-UniRule"/>
</dbReference>
<dbReference type="GO" id="GO:0004619">
    <property type="term" value="F:phosphoglycerate mutase activity"/>
    <property type="evidence" value="ECO:0007669"/>
    <property type="project" value="UniProtKB-EC"/>
</dbReference>
<dbReference type="GO" id="GO:0006007">
    <property type="term" value="P:glucose catabolic process"/>
    <property type="evidence" value="ECO:0007669"/>
    <property type="project" value="InterPro"/>
</dbReference>
<dbReference type="GO" id="GO:0006096">
    <property type="term" value="P:glycolytic process"/>
    <property type="evidence" value="ECO:0007669"/>
    <property type="project" value="UniProtKB-UniRule"/>
</dbReference>
<dbReference type="CDD" id="cd16010">
    <property type="entry name" value="iPGM"/>
    <property type="match status" value="1"/>
</dbReference>
<dbReference type="FunFam" id="3.40.1450.10:FF:000001">
    <property type="entry name" value="2,3-bisphosphoglycerate-independent phosphoglycerate mutase"/>
    <property type="match status" value="1"/>
</dbReference>
<dbReference type="FunFam" id="3.40.720.10:FF:000001">
    <property type="entry name" value="2,3-bisphosphoglycerate-independent phosphoglycerate mutase"/>
    <property type="match status" value="1"/>
</dbReference>
<dbReference type="Gene3D" id="3.40.720.10">
    <property type="entry name" value="Alkaline Phosphatase, subunit A"/>
    <property type="match status" value="1"/>
</dbReference>
<dbReference type="Gene3D" id="3.40.1450.10">
    <property type="entry name" value="BPG-independent phosphoglycerate mutase, domain B"/>
    <property type="match status" value="1"/>
</dbReference>
<dbReference type="HAMAP" id="MF_01038">
    <property type="entry name" value="GpmI"/>
    <property type="match status" value="1"/>
</dbReference>
<dbReference type="InterPro" id="IPR017850">
    <property type="entry name" value="Alkaline_phosphatase_core_sf"/>
</dbReference>
<dbReference type="InterPro" id="IPR011258">
    <property type="entry name" value="BPG-indep_PGM_N"/>
</dbReference>
<dbReference type="InterPro" id="IPR006124">
    <property type="entry name" value="Metalloenzyme"/>
</dbReference>
<dbReference type="InterPro" id="IPR036646">
    <property type="entry name" value="PGAM_B_sf"/>
</dbReference>
<dbReference type="InterPro" id="IPR005995">
    <property type="entry name" value="Pgm_bpd_ind"/>
</dbReference>
<dbReference type="NCBIfam" id="TIGR01307">
    <property type="entry name" value="pgm_bpd_ind"/>
    <property type="match status" value="1"/>
</dbReference>
<dbReference type="PANTHER" id="PTHR31637">
    <property type="entry name" value="2,3-BISPHOSPHOGLYCERATE-INDEPENDENT PHOSPHOGLYCERATE MUTASE"/>
    <property type="match status" value="1"/>
</dbReference>
<dbReference type="PANTHER" id="PTHR31637:SF0">
    <property type="entry name" value="2,3-BISPHOSPHOGLYCERATE-INDEPENDENT PHOSPHOGLYCERATE MUTASE"/>
    <property type="match status" value="1"/>
</dbReference>
<dbReference type="Pfam" id="PF06415">
    <property type="entry name" value="iPGM_N"/>
    <property type="match status" value="1"/>
</dbReference>
<dbReference type="Pfam" id="PF01676">
    <property type="entry name" value="Metalloenzyme"/>
    <property type="match status" value="1"/>
</dbReference>
<dbReference type="PIRSF" id="PIRSF001492">
    <property type="entry name" value="IPGAM"/>
    <property type="match status" value="1"/>
</dbReference>
<dbReference type="SUPFAM" id="SSF64158">
    <property type="entry name" value="2,3-Bisphosphoglycerate-independent phosphoglycerate mutase, substrate-binding domain"/>
    <property type="match status" value="1"/>
</dbReference>
<dbReference type="SUPFAM" id="SSF53649">
    <property type="entry name" value="Alkaline phosphatase-like"/>
    <property type="match status" value="1"/>
</dbReference>
<organism>
    <name type="scientific">Methanosarcina barkeri (strain Fusaro / DSM 804)</name>
    <dbReference type="NCBI Taxonomy" id="269797"/>
    <lineage>
        <taxon>Archaea</taxon>
        <taxon>Methanobacteriati</taxon>
        <taxon>Methanobacteriota</taxon>
        <taxon>Stenosarchaea group</taxon>
        <taxon>Methanomicrobia</taxon>
        <taxon>Methanosarcinales</taxon>
        <taxon>Methanosarcinaceae</taxon>
        <taxon>Methanosarcina</taxon>
    </lineage>
</organism>
<evidence type="ECO:0000255" key="1">
    <source>
        <dbReference type="HAMAP-Rule" id="MF_01038"/>
    </source>
</evidence>
<protein>
    <recommendedName>
        <fullName evidence="1">2,3-bisphosphoglycerate-independent phosphoglycerate mutase 2</fullName>
        <shortName evidence="1">BPG-independent PGAM 2</shortName>
        <shortName evidence="1">Phosphoglyceromutase 2</shortName>
        <shortName evidence="1">iPGM 2</shortName>
        <ecNumber evidence="1">5.4.2.12</ecNumber>
    </recommendedName>
</protein>
<feature type="chain" id="PRO_0000212241" description="2,3-bisphosphoglycerate-independent phosphoglycerate mutase 2">
    <location>
        <begin position="1"/>
        <end position="525"/>
    </location>
</feature>
<feature type="active site" description="Phosphoserine intermediate" evidence="1">
    <location>
        <position position="64"/>
    </location>
</feature>
<feature type="binding site" evidence="1">
    <location>
        <position position="14"/>
    </location>
    <ligand>
        <name>Mn(2+)</name>
        <dbReference type="ChEBI" id="CHEBI:29035"/>
        <label>2</label>
    </ligand>
</feature>
<feature type="binding site" evidence="1">
    <location>
        <position position="64"/>
    </location>
    <ligand>
        <name>Mn(2+)</name>
        <dbReference type="ChEBI" id="CHEBI:29035"/>
        <label>2</label>
    </ligand>
</feature>
<feature type="binding site" evidence="1">
    <location>
        <position position="125"/>
    </location>
    <ligand>
        <name>substrate</name>
    </ligand>
</feature>
<feature type="binding site" evidence="1">
    <location>
        <begin position="155"/>
        <end position="156"/>
    </location>
    <ligand>
        <name>substrate</name>
    </ligand>
</feature>
<feature type="binding site" evidence="1">
    <location>
        <position position="187"/>
    </location>
    <ligand>
        <name>substrate</name>
    </ligand>
</feature>
<feature type="binding site" evidence="1">
    <location>
        <position position="193"/>
    </location>
    <ligand>
        <name>substrate</name>
    </ligand>
</feature>
<feature type="binding site" evidence="1">
    <location>
        <begin position="274"/>
        <end position="277"/>
    </location>
    <ligand>
        <name>substrate</name>
    </ligand>
</feature>
<feature type="binding site" evidence="1">
    <location>
        <position position="347"/>
    </location>
    <ligand>
        <name>substrate</name>
    </ligand>
</feature>
<feature type="binding site" evidence="1">
    <location>
        <position position="414"/>
    </location>
    <ligand>
        <name>Mn(2+)</name>
        <dbReference type="ChEBI" id="CHEBI:29035"/>
        <label>1</label>
    </ligand>
</feature>
<feature type="binding site" evidence="1">
    <location>
        <position position="418"/>
    </location>
    <ligand>
        <name>Mn(2+)</name>
        <dbReference type="ChEBI" id="CHEBI:29035"/>
        <label>1</label>
    </ligand>
</feature>
<feature type="binding site" evidence="1">
    <location>
        <position position="455"/>
    </location>
    <ligand>
        <name>Mn(2+)</name>
        <dbReference type="ChEBI" id="CHEBI:29035"/>
        <label>2</label>
    </ligand>
</feature>
<feature type="binding site" evidence="1">
    <location>
        <position position="456"/>
    </location>
    <ligand>
        <name>Mn(2+)</name>
        <dbReference type="ChEBI" id="CHEBI:29035"/>
        <label>2</label>
    </ligand>
</feature>
<feature type="binding site" evidence="1">
    <location>
        <position position="474"/>
    </location>
    <ligand>
        <name>Mn(2+)</name>
        <dbReference type="ChEBI" id="CHEBI:29035"/>
        <label>1</label>
    </ligand>
</feature>
<sequence length="525" mass="58562">MTQARRPLMLIIFDGWGYREAKEGNAVMTARTPNLDRLEKECPWCFLKASGEAVGLPKGMMGNSEVGHLTIGAGRIVNQDLTRINISIKNGDFFKNPVFLNAISNVKANASSLHLMGLASCGGIHSYMPHLHALLKLVQEKDLKKVYIHAFLDGRDEPPKAALGDIKKLDAFCKEHGNAKIATVSGRYYAMDRDKRWDRTKLAYDALTRGVAPYTAPNAETAVSNAYSRGETDEFVKPTIITEQVITEQVITEQAEKPVATVQDNDSVIFFNFRADRARQITWAFVKDDFDGFMREKRPEVYFVCMTQYDETLEVPIAFPPIKLENVLGEVLSKHGLIQLRIAETEKYAHVTYFLNGGEEKRYKDEDRCLIPSPKIATYDLKPEMSAYEITDEVIRRIQSGKYDVIVLNFANMDMVGHTGIFEAAVKAVEAVDKCIGRIVEVLKEKGGVALITADHGNAEEMIDLKTGEPHTAHTSNPVKCIYFGNSEIKALRNGKLCDVAPTILELLGIPKPQEMTGKSLLVKD</sequence>
<name>GPMI2_METBF</name>
<accession>Q46AE4</accession>
<keyword id="KW-0324">Glycolysis</keyword>
<keyword id="KW-0413">Isomerase</keyword>
<keyword id="KW-0464">Manganese</keyword>
<keyword id="KW-0479">Metal-binding</keyword>
<proteinExistence type="inferred from homology"/>